<feature type="chain" id="PRO_0000084783" description="Pachytene checkpoint protein 2 homolog">
    <location>
        <begin position="1"/>
        <end position="432"/>
    </location>
</feature>
<feature type="binding site" evidence="3">
    <location>
        <begin position="179"/>
        <end position="186"/>
    </location>
    <ligand>
        <name>ATP</name>
        <dbReference type="ChEBI" id="CHEBI:30616"/>
    </ligand>
</feature>
<feature type="modified residue" description="N-acetylmethionine" evidence="2">
    <location>
        <position position="1"/>
    </location>
</feature>
<feature type="splice variant" id="VSP_041559" description="In isoform 2." evidence="8">
    <location>
        <begin position="1"/>
        <end position="231"/>
    </location>
</feature>
<feature type="sequence conflict" description="In Ref. 1; BAB26861." evidence="9" ref="1">
    <original>H</original>
    <variation>R</variation>
    <location>
        <position position="148"/>
    </location>
</feature>
<feature type="sequence conflict" description="In Ref. 1; BAB26861." evidence="9" ref="1">
    <original>I</original>
    <variation>F</variation>
    <location>
        <position position="274"/>
    </location>
</feature>
<feature type="sequence conflict" description="In Ref. 1; BAE25076." evidence="9" ref="1">
    <original>G</original>
    <variation>S</variation>
    <location>
        <position position="409"/>
    </location>
</feature>
<organism>
    <name type="scientific">Mus musculus</name>
    <name type="common">Mouse</name>
    <dbReference type="NCBI Taxonomy" id="10090"/>
    <lineage>
        <taxon>Eukaryota</taxon>
        <taxon>Metazoa</taxon>
        <taxon>Chordata</taxon>
        <taxon>Craniata</taxon>
        <taxon>Vertebrata</taxon>
        <taxon>Euteleostomi</taxon>
        <taxon>Mammalia</taxon>
        <taxon>Eutheria</taxon>
        <taxon>Euarchontoglires</taxon>
        <taxon>Glires</taxon>
        <taxon>Rodentia</taxon>
        <taxon>Myomorpha</taxon>
        <taxon>Muroidea</taxon>
        <taxon>Muridae</taxon>
        <taxon>Murinae</taxon>
        <taxon>Mus</taxon>
        <taxon>Mus</taxon>
    </lineage>
</organism>
<proteinExistence type="evidence at protein level"/>
<protein>
    <recommendedName>
        <fullName>Pachytene checkpoint protein 2 homolog</fullName>
    </recommendedName>
    <alternativeName>
        <fullName>Thyroid hormone receptor interactor 13</fullName>
    </alternativeName>
    <alternativeName>
        <fullName>Thyroid receptor-interacting protein 13</fullName>
        <shortName>TR-interacting protein 13</shortName>
        <shortName>TRIP-13</shortName>
    </alternativeName>
</protein>
<gene>
    <name type="primary">Trip13</name>
    <name type="synonym">Pch2</name>
</gene>
<reference key="1">
    <citation type="journal article" date="2005" name="Science">
        <title>The transcriptional landscape of the mammalian genome.</title>
        <authorList>
            <person name="Carninci P."/>
            <person name="Kasukawa T."/>
            <person name="Katayama S."/>
            <person name="Gough J."/>
            <person name="Frith M.C."/>
            <person name="Maeda N."/>
            <person name="Oyama R."/>
            <person name="Ravasi T."/>
            <person name="Lenhard B."/>
            <person name="Wells C."/>
            <person name="Kodzius R."/>
            <person name="Shimokawa K."/>
            <person name="Bajic V.B."/>
            <person name="Brenner S.E."/>
            <person name="Batalov S."/>
            <person name="Forrest A.R."/>
            <person name="Zavolan M."/>
            <person name="Davis M.J."/>
            <person name="Wilming L.G."/>
            <person name="Aidinis V."/>
            <person name="Allen J.E."/>
            <person name="Ambesi-Impiombato A."/>
            <person name="Apweiler R."/>
            <person name="Aturaliya R.N."/>
            <person name="Bailey T.L."/>
            <person name="Bansal M."/>
            <person name="Baxter L."/>
            <person name="Beisel K.W."/>
            <person name="Bersano T."/>
            <person name="Bono H."/>
            <person name="Chalk A.M."/>
            <person name="Chiu K.P."/>
            <person name="Choudhary V."/>
            <person name="Christoffels A."/>
            <person name="Clutterbuck D.R."/>
            <person name="Crowe M.L."/>
            <person name="Dalla E."/>
            <person name="Dalrymple B.P."/>
            <person name="de Bono B."/>
            <person name="Della Gatta G."/>
            <person name="di Bernardo D."/>
            <person name="Down T."/>
            <person name="Engstrom P."/>
            <person name="Fagiolini M."/>
            <person name="Faulkner G."/>
            <person name="Fletcher C.F."/>
            <person name="Fukushima T."/>
            <person name="Furuno M."/>
            <person name="Futaki S."/>
            <person name="Gariboldi M."/>
            <person name="Georgii-Hemming P."/>
            <person name="Gingeras T.R."/>
            <person name="Gojobori T."/>
            <person name="Green R.E."/>
            <person name="Gustincich S."/>
            <person name="Harbers M."/>
            <person name="Hayashi Y."/>
            <person name="Hensch T.K."/>
            <person name="Hirokawa N."/>
            <person name="Hill D."/>
            <person name="Huminiecki L."/>
            <person name="Iacono M."/>
            <person name="Ikeo K."/>
            <person name="Iwama A."/>
            <person name="Ishikawa T."/>
            <person name="Jakt M."/>
            <person name="Kanapin A."/>
            <person name="Katoh M."/>
            <person name="Kawasawa Y."/>
            <person name="Kelso J."/>
            <person name="Kitamura H."/>
            <person name="Kitano H."/>
            <person name="Kollias G."/>
            <person name="Krishnan S.P."/>
            <person name="Kruger A."/>
            <person name="Kummerfeld S.K."/>
            <person name="Kurochkin I.V."/>
            <person name="Lareau L.F."/>
            <person name="Lazarevic D."/>
            <person name="Lipovich L."/>
            <person name="Liu J."/>
            <person name="Liuni S."/>
            <person name="McWilliam S."/>
            <person name="Madan Babu M."/>
            <person name="Madera M."/>
            <person name="Marchionni L."/>
            <person name="Matsuda H."/>
            <person name="Matsuzawa S."/>
            <person name="Miki H."/>
            <person name="Mignone F."/>
            <person name="Miyake S."/>
            <person name="Morris K."/>
            <person name="Mottagui-Tabar S."/>
            <person name="Mulder N."/>
            <person name="Nakano N."/>
            <person name="Nakauchi H."/>
            <person name="Ng P."/>
            <person name="Nilsson R."/>
            <person name="Nishiguchi S."/>
            <person name="Nishikawa S."/>
            <person name="Nori F."/>
            <person name="Ohara O."/>
            <person name="Okazaki Y."/>
            <person name="Orlando V."/>
            <person name="Pang K.C."/>
            <person name="Pavan W.J."/>
            <person name="Pavesi G."/>
            <person name="Pesole G."/>
            <person name="Petrovsky N."/>
            <person name="Piazza S."/>
            <person name="Reed J."/>
            <person name="Reid J.F."/>
            <person name="Ring B.Z."/>
            <person name="Ringwald M."/>
            <person name="Rost B."/>
            <person name="Ruan Y."/>
            <person name="Salzberg S.L."/>
            <person name="Sandelin A."/>
            <person name="Schneider C."/>
            <person name="Schoenbach C."/>
            <person name="Sekiguchi K."/>
            <person name="Semple C.A."/>
            <person name="Seno S."/>
            <person name="Sessa L."/>
            <person name="Sheng Y."/>
            <person name="Shibata Y."/>
            <person name="Shimada H."/>
            <person name="Shimada K."/>
            <person name="Silva D."/>
            <person name="Sinclair B."/>
            <person name="Sperling S."/>
            <person name="Stupka E."/>
            <person name="Sugiura K."/>
            <person name="Sultana R."/>
            <person name="Takenaka Y."/>
            <person name="Taki K."/>
            <person name="Tammoja K."/>
            <person name="Tan S.L."/>
            <person name="Tang S."/>
            <person name="Taylor M.S."/>
            <person name="Tegner J."/>
            <person name="Teichmann S.A."/>
            <person name="Ueda H.R."/>
            <person name="van Nimwegen E."/>
            <person name="Verardo R."/>
            <person name="Wei C.L."/>
            <person name="Yagi K."/>
            <person name="Yamanishi H."/>
            <person name="Zabarovsky E."/>
            <person name="Zhu S."/>
            <person name="Zimmer A."/>
            <person name="Hide W."/>
            <person name="Bult C."/>
            <person name="Grimmond S.M."/>
            <person name="Teasdale R.D."/>
            <person name="Liu E.T."/>
            <person name="Brusic V."/>
            <person name="Quackenbush J."/>
            <person name="Wahlestedt C."/>
            <person name="Mattick J.S."/>
            <person name="Hume D.A."/>
            <person name="Kai C."/>
            <person name="Sasaki D."/>
            <person name="Tomaru Y."/>
            <person name="Fukuda S."/>
            <person name="Kanamori-Katayama M."/>
            <person name="Suzuki M."/>
            <person name="Aoki J."/>
            <person name="Arakawa T."/>
            <person name="Iida J."/>
            <person name="Imamura K."/>
            <person name="Itoh M."/>
            <person name="Kato T."/>
            <person name="Kawaji H."/>
            <person name="Kawagashira N."/>
            <person name="Kawashima T."/>
            <person name="Kojima M."/>
            <person name="Kondo S."/>
            <person name="Konno H."/>
            <person name="Nakano K."/>
            <person name="Ninomiya N."/>
            <person name="Nishio T."/>
            <person name="Okada M."/>
            <person name="Plessy C."/>
            <person name="Shibata K."/>
            <person name="Shiraki T."/>
            <person name="Suzuki S."/>
            <person name="Tagami M."/>
            <person name="Waki K."/>
            <person name="Watahiki A."/>
            <person name="Okamura-Oho Y."/>
            <person name="Suzuki H."/>
            <person name="Kawai J."/>
            <person name="Hayashizaki Y."/>
        </authorList>
    </citation>
    <scope>NUCLEOTIDE SEQUENCE [LARGE SCALE MRNA] (ISOFORM 1)</scope>
    <source>
        <strain>C57BL/6J</strain>
        <tissue>Bone marrow</tissue>
        <tissue>Heart</tissue>
        <tissue>Stomach</tissue>
    </source>
</reference>
<reference key="2">
    <citation type="journal article" date="2009" name="PLoS Biol.">
        <title>Lineage-specific biology revealed by a finished genome assembly of the mouse.</title>
        <authorList>
            <person name="Church D.M."/>
            <person name="Goodstadt L."/>
            <person name="Hillier L.W."/>
            <person name="Zody M.C."/>
            <person name="Goldstein S."/>
            <person name="She X."/>
            <person name="Bult C.J."/>
            <person name="Agarwala R."/>
            <person name="Cherry J.L."/>
            <person name="DiCuccio M."/>
            <person name="Hlavina W."/>
            <person name="Kapustin Y."/>
            <person name="Meric P."/>
            <person name="Maglott D."/>
            <person name="Birtle Z."/>
            <person name="Marques A.C."/>
            <person name="Graves T."/>
            <person name="Zhou S."/>
            <person name="Teague B."/>
            <person name="Potamousis K."/>
            <person name="Churas C."/>
            <person name="Place M."/>
            <person name="Herschleb J."/>
            <person name="Runnheim R."/>
            <person name="Forrest D."/>
            <person name="Amos-Landgraf J."/>
            <person name="Schwartz D.C."/>
            <person name="Cheng Z."/>
            <person name="Lindblad-Toh K."/>
            <person name="Eichler E.E."/>
            <person name="Ponting C.P."/>
        </authorList>
    </citation>
    <scope>NUCLEOTIDE SEQUENCE [LARGE SCALE GENOMIC DNA]</scope>
    <source>
        <strain>C57BL/6J</strain>
    </source>
</reference>
<reference key="3">
    <citation type="submission" date="2005-07" db="EMBL/GenBank/DDBJ databases">
        <authorList>
            <person name="Mural R.J."/>
            <person name="Adams M.D."/>
            <person name="Myers E.W."/>
            <person name="Smith H.O."/>
            <person name="Venter J.C."/>
        </authorList>
    </citation>
    <scope>NUCLEOTIDE SEQUENCE [LARGE SCALE GENOMIC DNA]</scope>
</reference>
<reference key="4">
    <citation type="journal article" date="2004" name="Genome Res.">
        <title>The status, quality, and expansion of the NIH full-length cDNA project: the Mammalian Gene Collection (MGC).</title>
        <authorList>
            <consortium name="The MGC Project Team"/>
        </authorList>
    </citation>
    <scope>NUCLEOTIDE SEQUENCE [LARGE SCALE MRNA] (ISOFORMS 1 AND 2)</scope>
    <source>
        <strain>FVB/N</strain>
    </source>
</reference>
<reference key="5">
    <citation type="journal article" date="2007" name="PLoS Genet.">
        <title>Mouse pachytene checkpoint 2 (trip13) is required for completing meiotic recombination but not synapsis.</title>
        <authorList>
            <person name="Li X.C."/>
            <person name="Schimenti J.C."/>
        </authorList>
    </citation>
    <scope>FUNCTION</scope>
    <scope>DISRUPTION PHENOTYPE</scope>
</reference>
<reference key="6">
    <citation type="journal article" date="2009" name="PLoS Genet.">
        <title>Mouse HORMAD1 and HORMAD2, two conserved meiotic chromosomal proteins, are depleted from synapsed chromosome axes with the help of TRIP13 AAA-ATPase.</title>
        <authorList>
            <person name="Wojtasz L."/>
            <person name="Daniel K."/>
            <person name="Roig I."/>
            <person name="Bolcun-Filas E."/>
            <person name="Xu H."/>
            <person name="Boonsanay V."/>
            <person name="Eckmann C.R."/>
            <person name="Cooke H.J."/>
            <person name="Jasin M."/>
            <person name="Keeney S."/>
            <person name="McKay M.J."/>
            <person name="Toth A."/>
        </authorList>
    </citation>
    <scope>FUNCTION</scope>
</reference>
<reference key="7">
    <citation type="journal article" date="2010" name="Cell">
        <title>A tissue-specific atlas of mouse protein phosphorylation and expression.</title>
        <authorList>
            <person name="Huttlin E.L."/>
            <person name="Jedrychowski M.P."/>
            <person name="Elias J.E."/>
            <person name="Goswami T."/>
            <person name="Rad R."/>
            <person name="Beausoleil S.A."/>
            <person name="Villen J."/>
            <person name="Haas W."/>
            <person name="Sowa M.E."/>
            <person name="Gygi S.P."/>
        </authorList>
    </citation>
    <scope>IDENTIFICATION BY MASS SPECTROMETRY [LARGE SCALE ANALYSIS]</scope>
    <source>
        <tissue>Spleen</tissue>
        <tissue>Testis</tissue>
    </source>
</reference>
<reference key="8">
    <citation type="journal article" date="2010" name="PLoS Genet.">
        <title>Mouse TRIP13/PCH2 is required for recombination and normal higher-order chromosome structure during meiosis.</title>
        <authorList>
            <person name="Roig I."/>
            <person name="Dowdle J.A."/>
            <person name="Toth A."/>
            <person name="de Rooij D.G."/>
            <person name="Jasin M."/>
            <person name="Keeney S."/>
        </authorList>
    </citation>
    <scope>FUNCTION</scope>
    <scope>TISSUE SPECIFICITY</scope>
    <scope>DISRUPTION PHENOTYPE</scope>
</reference>
<reference key="9">
    <citation type="journal article" date="2019" name="PLoS Genet.">
        <title>The PSMA8 subunit of the spermatoproteasome is essential for proper meiotic exit and mouse fertility.</title>
        <authorList>
            <person name="Gomez-H L."/>
            <person name="Felipe-Medina N."/>
            <person name="Condezo Y.B."/>
            <person name="Garcia-Valiente R."/>
            <person name="Ramos I."/>
            <person name="Suja J.A."/>
            <person name="Barbero J.L."/>
            <person name="Roig I."/>
            <person name="Sanchez-Martin M."/>
            <person name="de Rooij D.G."/>
            <person name="Llano E."/>
            <person name="Pendas A.M."/>
        </authorList>
    </citation>
    <scope>INTERACTION WITH PSMA8</scope>
</reference>
<keyword id="KW-0007">Acetylation</keyword>
<keyword id="KW-0025">Alternative splicing</keyword>
<keyword id="KW-0067">ATP-binding</keyword>
<keyword id="KW-0221">Differentiation</keyword>
<keyword id="KW-0469">Meiosis</keyword>
<keyword id="KW-0547">Nucleotide-binding</keyword>
<keyword id="KW-0896">Oogenesis</keyword>
<keyword id="KW-1185">Reference proteome</keyword>
<keyword id="KW-0744">Spermatogenesis</keyword>
<accession>Q3UA06</accession>
<accession>A0JNT8</accession>
<accession>Q05CL4</accession>
<accession>Q3UQG6</accession>
<accession>Q9CWW8</accession>
<evidence type="ECO:0000250" key="1"/>
<evidence type="ECO:0000250" key="2">
    <source>
        <dbReference type="UniProtKB" id="Q15645"/>
    </source>
</evidence>
<evidence type="ECO:0000255" key="3"/>
<evidence type="ECO:0000269" key="4">
    <source>
    </source>
</evidence>
<evidence type="ECO:0000269" key="5">
    <source>
    </source>
</evidence>
<evidence type="ECO:0000269" key="6">
    <source>
    </source>
</evidence>
<evidence type="ECO:0000269" key="7">
    <source>
    </source>
</evidence>
<evidence type="ECO:0000303" key="8">
    <source>
    </source>
</evidence>
<evidence type="ECO:0000305" key="9"/>
<name>PCH2_MOUSE</name>
<dbReference type="EMBL" id="AK010336">
    <property type="protein sequence ID" value="BAB26861.1"/>
    <property type="molecule type" value="mRNA"/>
</dbReference>
<dbReference type="EMBL" id="AK142463">
    <property type="protein sequence ID" value="BAE25076.1"/>
    <property type="molecule type" value="mRNA"/>
</dbReference>
<dbReference type="EMBL" id="AK146877">
    <property type="protein sequence ID" value="BAE27499.1"/>
    <property type="molecule type" value="mRNA"/>
</dbReference>
<dbReference type="EMBL" id="AK151568">
    <property type="protein sequence ID" value="BAE30510.1"/>
    <property type="molecule type" value="mRNA"/>
</dbReference>
<dbReference type="EMBL" id="CT010471">
    <property type="status" value="NOT_ANNOTATED_CDS"/>
    <property type="molecule type" value="Genomic_DNA"/>
</dbReference>
<dbReference type="EMBL" id="CH466563">
    <property type="protein sequence ID" value="EDL37076.1"/>
    <property type="molecule type" value="Genomic_DNA"/>
</dbReference>
<dbReference type="EMBL" id="BC023834">
    <property type="protein sequence ID" value="AAH23834.1"/>
    <property type="molecule type" value="mRNA"/>
</dbReference>
<dbReference type="EMBL" id="BC126946">
    <property type="protein sequence ID" value="AAI26947.1"/>
    <property type="molecule type" value="mRNA"/>
</dbReference>
<dbReference type="CCDS" id="CCDS26637.1">
    <molecule id="Q3UA06-1"/>
</dbReference>
<dbReference type="RefSeq" id="NP_081458.1">
    <molecule id="Q3UA06-1"/>
    <property type="nucleotide sequence ID" value="NM_027182.3"/>
</dbReference>
<dbReference type="SMR" id="Q3UA06"/>
<dbReference type="BioGRID" id="213633">
    <property type="interactions" value="6"/>
</dbReference>
<dbReference type="FunCoup" id="Q3UA06">
    <property type="interactions" value="2680"/>
</dbReference>
<dbReference type="IntAct" id="Q3UA06">
    <property type="interactions" value="10"/>
</dbReference>
<dbReference type="MINT" id="Q3UA06"/>
<dbReference type="STRING" id="10090.ENSMUSP00000022053"/>
<dbReference type="iPTMnet" id="Q3UA06"/>
<dbReference type="PhosphoSitePlus" id="Q3UA06"/>
<dbReference type="SwissPalm" id="Q3UA06"/>
<dbReference type="PaxDb" id="10090-ENSMUSP00000022053"/>
<dbReference type="PeptideAtlas" id="Q3UA06"/>
<dbReference type="ProteomicsDB" id="288070">
    <molecule id="Q3UA06-1"/>
</dbReference>
<dbReference type="ProteomicsDB" id="288071">
    <molecule id="Q3UA06-2"/>
</dbReference>
<dbReference type="Pumba" id="Q3UA06"/>
<dbReference type="Antibodypedia" id="8906">
    <property type="antibodies" value="324 antibodies from 33 providers"/>
</dbReference>
<dbReference type="DNASU" id="69716"/>
<dbReference type="Ensembl" id="ENSMUST00000022053.11">
    <molecule id="Q3UA06-1"/>
    <property type="protein sequence ID" value="ENSMUSP00000022053.9"/>
    <property type="gene ID" value="ENSMUSG00000021569.11"/>
</dbReference>
<dbReference type="GeneID" id="69716"/>
<dbReference type="KEGG" id="mmu:69716"/>
<dbReference type="UCSC" id="uc007rei.1">
    <molecule id="Q3UA06-1"/>
    <property type="organism name" value="mouse"/>
</dbReference>
<dbReference type="UCSC" id="uc011zbt.1">
    <molecule id="Q3UA06-2"/>
    <property type="organism name" value="mouse"/>
</dbReference>
<dbReference type="AGR" id="MGI:1916966"/>
<dbReference type="CTD" id="9319"/>
<dbReference type="MGI" id="MGI:1916966">
    <property type="gene designation" value="Trip13"/>
</dbReference>
<dbReference type="VEuPathDB" id="HostDB:ENSMUSG00000021569"/>
<dbReference type="eggNOG" id="KOG0744">
    <property type="taxonomic scope" value="Eukaryota"/>
</dbReference>
<dbReference type="GeneTree" id="ENSGT00390000017432"/>
<dbReference type="HOGENOM" id="CLU_028208_0_1_1"/>
<dbReference type="InParanoid" id="Q3UA06"/>
<dbReference type="OMA" id="NVCDSVQ"/>
<dbReference type="OrthoDB" id="10042665at2759"/>
<dbReference type="PhylomeDB" id="Q3UA06"/>
<dbReference type="TreeFam" id="TF313507"/>
<dbReference type="BioGRID-ORCS" id="69716">
    <property type="hits" value="12 hits in 117 CRISPR screens"/>
</dbReference>
<dbReference type="PRO" id="PR:Q3UA06"/>
<dbReference type="Proteomes" id="UP000000589">
    <property type="component" value="Chromosome 13"/>
</dbReference>
<dbReference type="RNAct" id="Q3UA06">
    <property type="molecule type" value="protein"/>
</dbReference>
<dbReference type="Bgee" id="ENSMUSG00000021569">
    <property type="expression patterns" value="Expressed in respiratory primordium and 214 other cell types or tissues"/>
</dbReference>
<dbReference type="ExpressionAtlas" id="Q3UA06">
    <property type="expression patterns" value="baseline and differential"/>
</dbReference>
<dbReference type="GO" id="GO:0001673">
    <property type="term" value="C:male germ cell nucleus"/>
    <property type="evidence" value="ECO:0000314"/>
    <property type="project" value="MGI"/>
</dbReference>
<dbReference type="GO" id="GO:0005524">
    <property type="term" value="F:ATP binding"/>
    <property type="evidence" value="ECO:0007669"/>
    <property type="project" value="UniProtKB-KW"/>
</dbReference>
<dbReference type="GO" id="GO:0016887">
    <property type="term" value="F:ATP hydrolysis activity"/>
    <property type="evidence" value="ECO:0007669"/>
    <property type="project" value="InterPro"/>
</dbReference>
<dbReference type="GO" id="GO:0042802">
    <property type="term" value="F:identical protein binding"/>
    <property type="evidence" value="ECO:0000353"/>
    <property type="project" value="MGI"/>
</dbReference>
<dbReference type="GO" id="GO:0006302">
    <property type="term" value="P:double-strand break repair"/>
    <property type="evidence" value="ECO:0000315"/>
    <property type="project" value="UniProtKB"/>
</dbReference>
<dbReference type="GO" id="GO:0007144">
    <property type="term" value="P:female meiosis I"/>
    <property type="evidence" value="ECO:0000315"/>
    <property type="project" value="MGI"/>
</dbReference>
<dbReference type="GO" id="GO:0007141">
    <property type="term" value="P:male meiosis I"/>
    <property type="evidence" value="ECO:0000315"/>
    <property type="project" value="MGI"/>
</dbReference>
<dbReference type="GO" id="GO:0007094">
    <property type="term" value="P:mitotic spindle assembly checkpoint signaling"/>
    <property type="evidence" value="ECO:0000250"/>
    <property type="project" value="UniProtKB"/>
</dbReference>
<dbReference type="GO" id="GO:0001556">
    <property type="term" value="P:oocyte maturation"/>
    <property type="evidence" value="ECO:0000315"/>
    <property type="project" value="MGI"/>
</dbReference>
<dbReference type="GO" id="GO:0048477">
    <property type="term" value="P:oogenesis"/>
    <property type="evidence" value="ECO:0000315"/>
    <property type="project" value="UniProtKB"/>
</dbReference>
<dbReference type="GO" id="GO:0007131">
    <property type="term" value="P:reciprocal meiotic recombination"/>
    <property type="evidence" value="ECO:0000315"/>
    <property type="project" value="UniProtKB"/>
</dbReference>
<dbReference type="GO" id="GO:0007286">
    <property type="term" value="P:spermatid development"/>
    <property type="evidence" value="ECO:0000315"/>
    <property type="project" value="MGI"/>
</dbReference>
<dbReference type="GO" id="GO:0007283">
    <property type="term" value="P:spermatogenesis"/>
    <property type="evidence" value="ECO:0000315"/>
    <property type="project" value="UniProtKB"/>
</dbReference>
<dbReference type="GO" id="GO:0007130">
    <property type="term" value="P:synaptonemal complex assembly"/>
    <property type="evidence" value="ECO:0000315"/>
    <property type="project" value="UniProtKB"/>
</dbReference>
<dbReference type="CDD" id="cd19508">
    <property type="entry name" value="RecA-like_Pch2-like"/>
    <property type="match status" value="1"/>
</dbReference>
<dbReference type="FunFam" id="3.40.50.300:FF:000662">
    <property type="entry name" value="Pachytene checkpoint protein 2 homolog"/>
    <property type="match status" value="1"/>
</dbReference>
<dbReference type="Gene3D" id="3.40.50.300">
    <property type="entry name" value="P-loop containing nucleotide triphosphate hydrolases"/>
    <property type="match status" value="1"/>
</dbReference>
<dbReference type="InterPro" id="IPR003593">
    <property type="entry name" value="AAA+_ATPase"/>
</dbReference>
<dbReference type="InterPro" id="IPR003959">
    <property type="entry name" value="ATPase_AAA_core"/>
</dbReference>
<dbReference type="InterPro" id="IPR003960">
    <property type="entry name" value="ATPase_AAA_CS"/>
</dbReference>
<dbReference type="InterPro" id="IPR001270">
    <property type="entry name" value="ClpA/B"/>
</dbReference>
<dbReference type="InterPro" id="IPR027417">
    <property type="entry name" value="P-loop_NTPase"/>
</dbReference>
<dbReference type="InterPro" id="IPR044539">
    <property type="entry name" value="Pch2-like"/>
</dbReference>
<dbReference type="PANTHER" id="PTHR45991">
    <property type="entry name" value="PACHYTENE CHECKPOINT PROTEIN 2"/>
    <property type="match status" value="1"/>
</dbReference>
<dbReference type="PANTHER" id="PTHR45991:SF1">
    <property type="entry name" value="PACHYTENE CHECKPOINT PROTEIN 2 HOMOLOG"/>
    <property type="match status" value="1"/>
</dbReference>
<dbReference type="Pfam" id="PF00004">
    <property type="entry name" value="AAA"/>
    <property type="match status" value="1"/>
</dbReference>
<dbReference type="Pfam" id="PF23242">
    <property type="entry name" value="AAA_lid_TRIP13_C"/>
    <property type="match status" value="1"/>
</dbReference>
<dbReference type="Pfam" id="PF23563">
    <property type="entry name" value="TRIP13_N"/>
    <property type="match status" value="1"/>
</dbReference>
<dbReference type="PRINTS" id="PR00300">
    <property type="entry name" value="CLPPROTEASEA"/>
</dbReference>
<dbReference type="SMART" id="SM00382">
    <property type="entry name" value="AAA"/>
    <property type="match status" value="1"/>
</dbReference>
<dbReference type="SUPFAM" id="SSF52540">
    <property type="entry name" value="P-loop containing nucleoside triphosphate hydrolases"/>
    <property type="match status" value="1"/>
</dbReference>
<dbReference type="PROSITE" id="PS00674">
    <property type="entry name" value="AAA"/>
    <property type="match status" value="1"/>
</dbReference>
<sequence>MDEAVGDLKQALPCVAESPAVHVEVLQRSGSTAKKEDIKSSVYRLLNRHNIVFGDYVWTEFDDPFLSRNVQSVSIVDTELKAKDPQPIDLSACTIALHIFQLNEEGPSSENLDEETENIIAASHWVLPAAEFHGLWDSLVYDVEVKSHLLDYVMTTVLFSDKNVDSNLITWNRVVLLHGPPGTGKTSLCKALAQKLTIRLSSRYRYGQLIEINSHSLFSKWFSESGKLVTKMFQKIQDLIDDKEALVFVLIDEVESLTAARNACRAGAEPSDAIRVVNAVLTQIDQIKRHSNVVILTTSNITEKIDVAFVDRADIKQYIGPPSAAAIFKIYLSCLEELMKCQIIYPRQQLLTLRELEMIGFIENNVSKLSLLLSEISRKSEGLSGRVLRKLPFLAHALYIQAPSVTIEGFLQALSLAVDKQFEEKKKLSAYV</sequence>
<comment type="function">
    <text evidence="2 4 5 6">Plays a key role in chromosome recombination and chromosome structure development during meiosis. Required at early steps in meiotic recombination that leads to non-crossovers pathways. Also needed for efficient completion of homologous synapsis by influencing crossover distribution along the chromosomes affecting both crossovers and non-crossovers pathways. Also required for development of higher-order chromosome structures and is needed for synaptonemal-complex formation. In males, required for efficient synapsis of the sex chromosomes and for sex body formation. Promotes early steps of the DNA double-strand breaks (DSBs) repair process upstream of the assembly of RAD51 complexes. Required for depletion of HORMAD1 and HORMAD2 from synapsed chromosomes (PubMed:17696610, PubMed:19851446, PubMed:20711356). Plays a role in mitotic spindle assembly checkpoint (SAC) activation (By similarity).</text>
</comment>
<comment type="subunit">
    <text evidence="1 7">Specifically interacts with the ligand binding domain of the thyroid receptor (TR). This interaction does not require the presence of thyroid hormone for its interaction (By similarity). Interacts with proteasome subunit PSMA8; to participate in meiosis progression during spermatogenesis (PubMed:31437213).</text>
</comment>
<comment type="interaction">
    <interactant intactId="EBI-308990">
        <id>Q3UA06</id>
    </interactant>
    <interactant intactId="EBI-21183045">
        <id>Q99LG4</id>
        <label>Ttc5</label>
    </interactant>
    <organismsDiffer>false</organismsDiffer>
    <experiments>2</experiments>
</comment>
<comment type="alternative products">
    <event type="alternative splicing"/>
    <isoform>
        <id>Q3UA06-1</id>
        <name>1</name>
        <sequence type="displayed"/>
    </isoform>
    <isoform>
        <id>Q3UA06-2</id>
        <name>2</name>
        <sequence type="described" ref="VSP_041559"/>
    </isoform>
</comment>
<comment type="tissue specificity">
    <text evidence="6">Widely expressed, including in testis.</text>
</comment>
<comment type="disruption phenotype">
    <text evidence="4 6">Mice develop normally without obvious somatic defects but males and females are sterile due to meiotic disruption in meiocytes. Homozygous mutants display small gonads and females have few or no follicles, due to oocyte elimination between pachynema and dictyate. Mutant testes display reduced populated tubules and spermatogenesis is mainly arrested at spermatocyte stages of epithelial stage IV, corresponding to pachynema. Different phenotypes are observed in the different knockout experiments tested. In Trip13(RRB047) mutant mice, also named Trip13(mod) allele for moderate, the number of crossovers are not affected and meiocytes undergo homologous chromosome synapsis despide the presence of unrepaired DSBs in pachynema. Using a more severe mutant allele, named Trip13(sev) for severe, additional defects are observed: the numbers of crossovers and chiasmata are reduced in the absence of TRIP13, and their distribution along the chromosomes is altered (PubMed:20711356). Autosomal bivalents in meiocytes frequently display pericentric synaptic forks and other defects (PubMed:20711356). Recombination defects are evident very early in meiotic prophase, soon after DSB formation (PubMed:20711356). These results suggest that the absence of defects in the number of crossovers observed in Trip13(RRB047) mutant is due to the use of a weak hypomorphic mutant allele.</text>
</comment>
<comment type="similarity">
    <text evidence="9">Belongs to the AAA ATPase family. PCH2 subfamily.</text>
</comment>